<comment type="function">
    <text evidence="1">Hydrolyzes both purine and pyrimidine ribonucleosides with a broad-substrate specificity.</text>
</comment>
<comment type="similarity">
    <text evidence="1">Belongs to the IUNH family. RihC subfamily.</text>
</comment>
<feature type="chain" id="PRO_1000184897" description="Non-specific ribonucleoside hydrolase RihC">
    <location>
        <begin position="1"/>
        <end position="304"/>
    </location>
</feature>
<feature type="active site" evidence="1">
    <location>
        <position position="233"/>
    </location>
</feature>
<reference key="1">
    <citation type="journal article" date="2009" name="PLoS Genet.">
        <title>Organised genome dynamics in the Escherichia coli species results in highly diverse adaptive paths.</title>
        <authorList>
            <person name="Touchon M."/>
            <person name="Hoede C."/>
            <person name="Tenaillon O."/>
            <person name="Barbe V."/>
            <person name="Baeriswyl S."/>
            <person name="Bidet P."/>
            <person name="Bingen E."/>
            <person name="Bonacorsi S."/>
            <person name="Bouchier C."/>
            <person name="Bouvet O."/>
            <person name="Calteau A."/>
            <person name="Chiapello H."/>
            <person name="Clermont O."/>
            <person name="Cruveiller S."/>
            <person name="Danchin A."/>
            <person name="Diard M."/>
            <person name="Dossat C."/>
            <person name="Karoui M.E."/>
            <person name="Frapy E."/>
            <person name="Garry L."/>
            <person name="Ghigo J.M."/>
            <person name="Gilles A.M."/>
            <person name="Johnson J."/>
            <person name="Le Bouguenec C."/>
            <person name="Lescat M."/>
            <person name="Mangenot S."/>
            <person name="Martinez-Jehanne V."/>
            <person name="Matic I."/>
            <person name="Nassif X."/>
            <person name="Oztas S."/>
            <person name="Petit M.A."/>
            <person name="Pichon C."/>
            <person name="Rouy Z."/>
            <person name="Ruf C.S."/>
            <person name="Schneider D."/>
            <person name="Tourret J."/>
            <person name="Vacherie B."/>
            <person name="Vallenet D."/>
            <person name="Medigue C."/>
            <person name="Rocha E.P.C."/>
            <person name="Denamur E."/>
        </authorList>
    </citation>
    <scope>NUCLEOTIDE SEQUENCE [LARGE SCALE GENOMIC DNA]</scope>
    <source>
        <strain>55989 / EAEC</strain>
    </source>
</reference>
<keyword id="KW-0326">Glycosidase</keyword>
<keyword id="KW-0378">Hydrolase</keyword>
<keyword id="KW-1185">Reference proteome</keyword>
<accession>B7L4F2</accession>
<organism>
    <name type="scientific">Escherichia coli (strain 55989 / EAEC)</name>
    <dbReference type="NCBI Taxonomy" id="585055"/>
    <lineage>
        <taxon>Bacteria</taxon>
        <taxon>Pseudomonadati</taxon>
        <taxon>Pseudomonadota</taxon>
        <taxon>Gammaproteobacteria</taxon>
        <taxon>Enterobacterales</taxon>
        <taxon>Enterobacteriaceae</taxon>
        <taxon>Escherichia</taxon>
    </lineage>
</organism>
<protein>
    <recommendedName>
        <fullName evidence="1">Non-specific ribonucleoside hydrolase RihC</fullName>
        <ecNumber evidence="1">3.2.-.-</ecNumber>
    </recommendedName>
    <alternativeName>
        <fullName evidence="1">Purine/pyrimidine ribonucleoside hydrolase</fullName>
    </alternativeName>
</protein>
<proteinExistence type="inferred from homology"/>
<dbReference type="EC" id="3.2.-.-" evidence="1"/>
<dbReference type="EMBL" id="CU928145">
    <property type="protein sequence ID" value="CAU95916.1"/>
    <property type="molecule type" value="Genomic_DNA"/>
</dbReference>
<dbReference type="RefSeq" id="WP_001239142.1">
    <property type="nucleotide sequence ID" value="NC_011748.1"/>
</dbReference>
<dbReference type="SMR" id="B7L4F2"/>
<dbReference type="GeneID" id="75169929"/>
<dbReference type="KEGG" id="eck:EC55989_0029"/>
<dbReference type="HOGENOM" id="CLU_036838_2_2_6"/>
<dbReference type="Proteomes" id="UP000000746">
    <property type="component" value="Chromosome"/>
</dbReference>
<dbReference type="GO" id="GO:0005829">
    <property type="term" value="C:cytosol"/>
    <property type="evidence" value="ECO:0007669"/>
    <property type="project" value="TreeGrafter"/>
</dbReference>
<dbReference type="GO" id="GO:0008477">
    <property type="term" value="F:purine nucleosidase activity"/>
    <property type="evidence" value="ECO:0007669"/>
    <property type="project" value="TreeGrafter"/>
</dbReference>
<dbReference type="GO" id="GO:0045437">
    <property type="term" value="F:uridine nucleosidase activity"/>
    <property type="evidence" value="ECO:0007669"/>
    <property type="project" value="UniProtKB-ARBA"/>
</dbReference>
<dbReference type="GO" id="GO:0006144">
    <property type="term" value="P:purine nucleobase metabolic process"/>
    <property type="evidence" value="ECO:0007669"/>
    <property type="project" value="UniProtKB-UniRule"/>
</dbReference>
<dbReference type="GO" id="GO:0006152">
    <property type="term" value="P:purine nucleoside catabolic process"/>
    <property type="evidence" value="ECO:0007669"/>
    <property type="project" value="TreeGrafter"/>
</dbReference>
<dbReference type="GO" id="GO:0006206">
    <property type="term" value="P:pyrimidine nucleobase metabolic process"/>
    <property type="evidence" value="ECO:0007669"/>
    <property type="project" value="UniProtKB-UniRule"/>
</dbReference>
<dbReference type="CDD" id="cd02651">
    <property type="entry name" value="nuc_hydro_IU_UC_XIUA"/>
    <property type="match status" value="1"/>
</dbReference>
<dbReference type="FunFam" id="3.90.245.10:FF:000002">
    <property type="entry name" value="Non-specific ribonucleoside hydrolase RihC"/>
    <property type="match status" value="1"/>
</dbReference>
<dbReference type="Gene3D" id="3.90.245.10">
    <property type="entry name" value="Ribonucleoside hydrolase-like"/>
    <property type="match status" value="1"/>
</dbReference>
<dbReference type="HAMAP" id="MF_01432">
    <property type="entry name" value="Nucleosid_hydro_RihC"/>
    <property type="match status" value="1"/>
</dbReference>
<dbReference type="InterPro" id="IPR015910">
    <property type="entry name" value="I/U_nuclsd_hydro_CS"/>
</dbReference>
<dbReference type="InterPro" id="IPR001910">
    <property type="entry name" value="Inosine/uridine_hydrolase_dom"/>
</dbReference>
<dbReference type="InterPro" id="IPR023186">
    <property type="entry name" value="IUNH"/>
</dbReference>
<dbReference type="InterPro" id="IPR022976">
    <property type="entry name" value="Nucleosid_hydro_RihC_nonspecif"/>
</dbReference>
<dbReference type="InterPro" id="IPR036452">
    <property type="entry name" value="Ribo_hydro-like"/>
</dbReference>
<dbReference type="NCBIfam" id="NF008036">
    <property type="entry name" value="PRK10768.1"/>
    <property type="match status" value="1"/>
</dbReference>
<dbReference type="PANTHER" id="PTHR12304">
    <property type="entry name" value="INOSINE-URIDINE PREFERRING NUCLEOSIDE HYDROLASE"/>
    <property type="match status" value="1"/>
</dbReference>
<dbReference type="PANTHER" id="PTHR12304:SF15">
    <property type="entry name" value="NON-SPECIFIC RIBONUCLEOSIDE HYDROLASE RIHC"/>
    <property type="match status" value="1"/>
</dbReference>
<dbReference type="Pfam" id="PF01156">
    <property type="entry name" value="IU_nuc_hydro"/>
    <property type="match status" value="1"/>
</dbReference>
<dbReference type="SUPFAM" id="SSF53590">
    <property type="entry name" value="Nucleoside hydrolase"/>
    <property type="match status" value="1"/>
</dbReference>
<dbReference type="PROSITE" id="PS01247">
    <property type="entry name" value="IUNH"/>
    <property type="match status" value="1"/>
</dbReference>
<evidence type="ECO:0000255" key="1">
    <source>
        <dbReference type="HAMAP-Rule" id="MF_01432"/>
    </source>
</evidence>
<sequence length="304" mass="32561">MRLPIFLDTDPGIDDAVAIAAAIFAPELDLQLMTTVAGNVSVEKTTRNALQLLHFWNAEIPLAQGAAVPLVRAPRDAASVHGESGMAGYDFVEHNRKPLGIPAFLAIRDALMRAPEPVTLVAIGPLTNIALLLSQCPECKPYIRRLVIMGGSAGRGNCTPNAEFNIAADPEAAACVFRSGIEIVMCGLDVTNQAILTPDYLSTLPQLNRTGKMLHALFSHYRSGSMQSGLRMHDLCAIAWLVRPDLFTLKPCFVAVETQGEFTSGTTVVDIDGCLGKPANVQVALDLDVKGFQQWVAEVLALAS</sequence>
<name>RIHC_ECO55</name>
<gene>
    <name evidence="1" type="primary">rihC</name>
    <name type="ordered locus">EC55989_0029</name>
</gene>